<accession>P57042</accession>
<accession>A1IPL8</accession>
<evidence type="ECO:0000250" key="1"/>
<evidence type="ECO:0000305" key="2"/>
<protein>
    <recommendedName>
        <fullName>Major outer membrane protein P.IB</fullName>
        <shortName>PIB</shortName>
        <shortName>Protein IB</shortName>
    </recommendedName>
    <alternativeName>
        <fullName>Class 3 protein</fullName>
    </alternativeName>
    <alternativeName>
        <fullName>Porin</fullName>
    </alternativeName>
</protein>
<organism>
    <name type="scientific">Neisseria meningitidis serogroup A / serotype 4A (strain DSM 15465 / Z2491)</name>
    <dbReference type="NCBI Taxonomy" id="122587"/>
    <lineage>
        <taxon>Bacteria</taxon>
        <taxon>Pseudomonadati</taxon>
        <taxon>Pseudomonadota</taxon>
        <taxon>Betaproteobacteria</taxon>
        <taxon>Neisseriales</taxon>
        <taxon>Neisseriaceae</taxon>
        <taxon>Neisseria</taxon>
    </lineage>
</organism>
<reference key="1">
    <citation type="journal article" date="2000" name="Nature">
        <title>Complete DNA sequence of a serogroup A strain of Neisseria meningitidis Z2491.</title>
        <authorList>
            <person name="Parkhill J."/>
            <person name="Achtman M."/>
            <person name="James K.D."/>
            <person name="Bentley S.D."/>
            <person name="Churcher C.M."/>
            <person name="Klee S.R."/>
            <person name="Morelli G."/>
            <person name="Basham D."/>
            <person name="Brown D."/>
            <person name="Chillingworth T."/>
            <person name="Davies R.M."/>
            <person name="Davis P."/>
            <person name="Devlin K."/>
            <person name="Feltwell T."/>
            <person name="Hamlin N."/>
            <person name="Holroyd S."/>
            <person name="Jagels K."/>
            <person name="Leather S."/>
            <person name="Moule S."/>
            <person name="Mungall K.L."/>
            <person name="Quail M.A."/>
            <person name="Rajandream M.A."/>
            <person name="Rutherford K.M."/>
            <person name="Simmonds M."/>
            <person name="Skelton J."/>
            <person name="Whitehead S."/>
            <person name="Spratt B.G."/>
            <person name="Barrell B.G."/>
        </authorList>
    </citation>
    <scope>NUCLEOTIDE SEQUENCE [LARGE SCALE GENOMIC DNA]</scope>
    <source>
        <strain>DSM 15465 / Z2491</strain>
    </source>
</reference>
<name>OMPB_NEIMA</name>
<comment type="function">
    <text>Serves as a slightly cation selective porin.</text>
</comment>
<comment type="subunit">
    <text>Homotrimer.</text>
</comment>
<comment type="subcellular location">
    <subcellularLocation>
        <location>Cell outer membrane</location>
        <topology>Multi-pass membrane protein</topology>
    </subcellularLocation>
</comment>
<comment type="similarity">
    <text evidence="2">Belongs to the Gram-negative porin family.</text>
</comment>
<keyword id="KW-0998">Cell outer membrane</keyword>
<keyword id="KW-0406">Ion transport</keyword>
<keyword id="KW-0472">Membrane</keyword>
<keyword id="KW-0626">Porin</keyword>
<keyword id="KW-0732">Signal</keyword>
<keyword id="KW-0812">Transmembrane</keyword>
<keyword id="KW-1134">Transmembrane beta strand</keyword>
<keyword id="KW-0813">Transport</keyword>
<dbReference type="EMBL" id="AL157959">
    <property type="protein sequence ID" value="CAM07688.1"/>
    <property type="molecule type" value="Genomic_DNA"/>
</dbReference>
<dbReference type="PIR" id="D81956">
    <property type="entry name" value="D81956"/>
</dbReference>
<dbReference type="RefSeq" id="WP_002247187.1">
    <property type="nucleotide sequence ID" value="NC_003116.1"/>
</dbReference>
<dbReference type="SMR" id="P57042"/>
<dbReference type="EnsemblBacteria" id="CAM07688">
    <property type="protein sequence ID" value="CAM07688"/>
    <property type="gene ID" value="NMA0398"/>
</dbReference>
<dbReference type="GeneID" id="93386965"/>
<dbReference type="KEGG" id="nma:NMA0398"/>
<dbReference type="HOGENOM" id="CLU_038238_4_0_4"/>
<dbReference type="Proteomes" id="UP000000626">
    <property type="component" value="Chromosome"/>
</dbReference>
<dbReference type="GO" id="GO:0009279">
    <property type="term" value="C:cell outer membrane"/>
    <property type="evidence" value="ECO:0007669"/>
    <property type="project" value="UniProtKB-SubCell"/>
</dbReference>
<dbReference type="GO" id="GO:0046930">
    <property type="term" value="C:pore complex"/>
    <property type="evidence" value="ECO:0007669"/>
    <property type="project" value="UniProtKB-KW"/>
</dbReference>
<dbReference type="GO" id="GO:0015288">
    <property type="term" value="F:porin activity"/>
    <property type="evidence" value="ECO:0007669"/>
    <property type="project" value="UniProtKB-KW"/>
</dbReference>
<dbReference type="GO" id="GO:0034220">
    <property type="term" value="P:monoatomic ion transmembrane transport"/>
    <property type="evidence" value="ECO:0007669"/>
    <property type="project" value="InterPro"/>
</dbReference>
<dbReference type="CDD" id="cd00342">
    <property type="entry name" value="gram_neg_porins"/>
    <property type="match status" value="1"/>
</dbReference>
<dbReference type="Gene3D" id="2.40.160.10">
    <property type="entry name" value="Porin"/>
    <property type="match status" value="1"/>
</dbReference>
<dbReference type="InterPro" id="IPR050298">
    <property type="entry name" value="Gram-neg_bact_OMP"/>
</dbReference>
<dbReference type="InterPro" id="IPR033900">
    <property type="entry name" value="Gram_neg_porin_domain"/>
</dbReference>
<dbReference type="InterPro" id="IPR023614">
    <property type="entry name" value="Porin_dom_sf"/>
</dbReference>
<dbReference type="InterPro" id="IPR001702">
    <property type="entry name" value="Porin_Gram-ve"/>
</dbReference>
<dbReference type="InterPro" id="IPR013793">
    <property type="entry name" value="Porin_Gram-ve_CS"/>
</dbReference>
<dbReference type="InterPro" id="IPR002299">
    <property type="entry name" value="Porin_Neis"/>
</dbReference>
<dbReference type="NCBIfam" id="NF040479">
    <property type="entry name" value="porin_porB_Neis"/>
    <property type="match status" value="1"/>
</dbReference>
<dbReference type="PANTHER" id="PTHR34501:SF9">
    <property type="entry name" value="MAJOR OUTER MEMBRANE PROTEIN P.IA"/>
    <property type="match status" value="1"/>
</dbReference>
<dbReference type="PANTHER" id="PTHR34501">
    <property type="entry name" value="PROTEIN YDDL-RELATED"/>
    <property type="match status" value="1"/>
</dbReference>
<dbReference type="Pfam" id="PF00267">
    <property type="entry name" value="Porin_1"/>
    <property type="match status" value="1"/>
</dbReference>
<dbReference type="PRINTS" id="PR00182">
    <property type="entry name" value="ECOLNEIPORIN"/>
</dbReference>
<dbReference type="PRINTS" id="PR00184">
    <property type="entry name" value="NEISSPPORIN"/>
</dbReference>
<dbReference type="SUPFAM" id="SSF56935">
    <property type="entry name" value="Porins"/>
    <property type="match status" value="1"/>
</dbReference>
<dbReference type="PROSITE" id="PS00576">
    <property type="entry name" value="GRAM_NEG_PORIN"/>
    <property type="match status" value="1"/>
</dbReference>
<sequence>MKKSLIALTLAALPVAAMADVTLYGTIKTGVETSRSVEHNGGQVVSVETGTGIVDLGSKIGFKGQEDLGNGLKAIWQVEQKASIAGTDSGWGNRQSFIGLKGGFGKLRVGRLNSVLKDTGDINPWDSKSDYLGVNKIAEPEARLISVRYDSPEFAGLSGSVQYALNDNVGRHNSESYHAGFNYKNGGFFVQYGGAYKRHQDVDDVKIEKYQIHRLVSGYDNDALYASVAVQQQDAKLVEDNSHNSQTEVAATLAYRFGNVTPRVSYAHGFKGSVDDAKRDNTYDQVVVGAEYDFSKRTSALVSAGWLQEGKGENKFVATAGGVGLRHKF</sequence>
<feature type="signal peptide" evidence="1">
    <location>
        <begin position="1"/>
        <end position="19"/>
    </location>
</feature>
<feature type="chain" id="PRO_0000025280" description="Major outer membrane protein P.IB">
    <location>
        <begin position="20"/>
        <end position="329"/>
    </location>
</feature>
<proteinExistence type="inferred from homology"/>
<gene>
    <name type="primary">porB</name>
    <name type="ordered locus">NMA0398</name>
</gene>